<sequence length="338" mass="37758">MTTLRLLISDSYDPWFNLAVEECIFRQMPATQRVLFLWRNADTVVIGRAQNPWKECNTRRMEEDNVRLARRSSGGGAVFHDLGNTCFTFMAGKPEYDKTISTHIVLAALNSLGVMADASGRNDLVVKTPDGDRKVSGSAYRETKDRGFHHGTLLLNADLSRLANYLNPDKKKLAAKGITSVRSRVANLTKLLPGITHQQVCQAVTEAFFAHYGERVDAEVISPDKTPDLPNFAETFARQSSWEWNFGQAPAFSHLLDERFTWGGVELHFDVEKGHITRAQVFTDSLNPAPLEALAGRLQGCLYRADKLQETCEALIATFPEQESELRELASWVAGAVR</sequence>
<gene>
    <name evidence="1" type="primary">lplA</name>
    <name type="ordered locus">SeSA_A4826</name>
</gene>
<evidence type="ECO:0000255" key="1">
    <source>
        <dbReference type="HAMAP-Rule" id="MF_01602"/>
    </source>
</evidence>
<evidence type="ECO:0000255" key="2">
    <source>
        <dbReference type="PROSITE-ProRule" id="PRU01067"/>
    </source>
</evidence>
<feature type="chain" id="PRO_1000148117" description="Lipoate-protein ligase A">
    <location>
        <begin position="1"/>
        <end position="338"/>
    </location>
</feature>
<feature type="domain" description="BPL/LPL catalytic" evidence="2">
    <location>
        <begin position="29"/>
        <end position="216"/>
    </location>
</feature>
<feature type="binding site" evidence="1">
    <location>
        <position position="71"/>
    </location>
    <ligand>
        <name>ATP</name>
        <dbReference type="ChEBI" id="CHEBI:30616"/>
    </ligand>
</feature>
<feature type="binding site" evidence="1">
    <location>
        <begin position="76"/>
        <end position="79"/>
    </location>
    <ligand>
        <name>ATP</name>
        <dbReference type="ChEBI" id="CHEBI:30616"/>
    </ligand>
</feature>
<feature type="binding site" evidence="1">
    <location>
        <position position="134"/>
    </location>
    <ligand>
        <name>(R)-lipoate</name>
        <dbReference type="ChEBI" id="CHEBI:83088"/>
    </ligand>
</feature>
<feature type="binding site" evidence="1">
    <location>
        <position position="134"/>
    </location>
    <ligand>
        <name>ATP</name>
        <dbReference type="ChEBI" id="CHEBI:30616"/>
    </ligand>
</feature>
<organism>
    <name type="scientific">Salmonella schwarzengrund (strain CVM19633)</name>
    <dbReference type="NCBI Taxonomy" id="439843"/>
    <lineage>
        <taxon>Bacteria</taxon>
        <taxon>Pseudomonadati</taxon>
        <taxon>Pseudomonadota</taxon>
        <taxon>Gammaproteobacteria</taxon>
        <taxon>Enterobacterales</taxon>
        <taxon>Enterobacteriaceae</taxon>
        <taxon>Salmonella</taxon>
    </lineage>
</organism>
<accession>B4TU46</accession>
<comment type="function">
    <text evidence="1">Catalyzes both the ATP-dependent activation of exogenously supplied lipoate to lipoyl-AMP and the transfer of the activated lipoyl onto the lipoyl domains of lipoate-dependent enzymes.</text>
</comment>
<comment type="catalytic activity">
    <reaction evidence="1">
        <text>L-lysyl-[lipoyl-carrier protein] + (R)-lipoate + ATP = N(6)-[(R)-lipoyl]-L-lysyl-[lipoyl-carrier protein] + AMP + diphosphate + H(+)</text>
        <dbReference type="Rhea" id="RHEA:49288"/>
        <dbReference type="Rhea" id="RHEA-COMP:10500"/>
        <dbReference type="Rhea" id="RHEA-COMP:10502"/>
        <dbReference type="ChEBI" id="CHEBI:15378"/>
        <dbReference type="ChEBI" id="CHEBI:29969"/>
        <dbReference type="ChEBI" id="CHEBI:30616"/>
        <dbReference type="ChEBI" id="CHEBI:33019"/>
        <dbReference type="ChEBI" id="CHEBI:83088"/>
        <dbReference type="ChEBI" id="CHEBI:83099"/>
        <dbReference type="ChEBI" id="CHEBI:456215"/>
        <dbReference type="EC" id="6.3.1.20"/>
    </reaction>
</comment>
<comment type="pathway">
    <text evidence="1">Protein modification; protein lipoylation via exogenous pathway; protein N(6)-(lipoyl)lysine from lipoate: step 1/2.</text>
</comment>
<comment type="pathway">
    <text evidence="1">Protein modification; protein lipoylation via exogenous pathway; protein N(6)-(lipoyl)lysine from lipoate: step 2/2.</text>
</comment>
<comment type="subunit">
    <text evidence="1">Monomer.</text>
</comment>
<comment type="subcellular location">
    <subcellularLocation>
        <location evidence="1">Cytoplasm</location>
    </subcellularLocation>
</comment>
<comment type="miscellaneous">
    <text evidence="1">In the transfer reaction, the free carboxyl group of lipoic acid is attached via an amide linkage to the epsilon-amino group of a specific lysine residue of lipoyl domains of lipoate-dependent enzymes.</text>
</comment>
<comment type="similarity">
    <text evidence="1">Belongs to the LplA family.</text>
</comment>
<name>LPLA_SALSV</name>
<protein>
    <recommendedName>
        <fullName evidence="1">Lipoate-protein ligase A</fullName>
        <ecNumber evidence="1">6.3.1.20</ecNumber>
    </recommendedName>
    <alternativeName>
        <fullName evidence="1">Lipoate--protein ligase</fullName>
    </alternativeName>
</protein>
<reference key="1">
    <citation type="journal article" date="2011" name="J. Bacteriol.">
        <title>Comparative genomics of 28 Salmonella enterica isolates: evidence for CRISPR-mediated adaptive sublineage evolution.</title>
        <authorList>
            <person name="Fricke W.F."/>
            <person name="Mammel M.K."/>
            <person name="McDermott P.F."/>
            <person name="Tartera C."/>
            <person name="White D.G."/>
            <person name="Leclerc J.E."/>
            <person name="Ravel J."/>
            <person name="Cebula T.A."/>
        </authorList>
    </citation>
    <scope>NUCLEOTIDE SEQUENCE [LARGE SCALE GENOMIC DNA]</scope>
    <source>
        <strain>CVM19633</strain>
    </source>
</reference>
<proteinExistence type="inferred from homology"/>
<keyword id="KW-0067">ATP-binding</keyword>
<keyword id="KW-0963">Cytoplasm</keyword>
<keyword id="KW-0436">Ligase</keyword>
<keyword id="KW-0547">Nucleotide-binding</keyword>
<dbReference type="EC" id="6.3.1.20" evidence="1"/>
<dbReference type="EMBL" id="CP001127">
    <property type="protein sequence ID" value="ACF92824.1"/>
    <property type="molecule type" value="Genomic_DNA"/>
</dbReference>
<dbReference type="RefSeq" id="WP_000209773.1">
    <property type="nucleotide sequence ID" value="NC_011094.1"/>
</dbReference>
<dbReference type="SMR" id="B4TU46"/>
<dbReference type="KEGG" id="sew:SeSA_A4826"/>
<dbReference type="HOGENOM" id="CLU_022986_0_1_6"/>
<dbReference type="UniPathway" id="UPA00537">
    <property type="reaction ID" value="UER00594"/>
</dbReference>
<dbReference type="UniPathway" id="UPA00537">
    <property type="reaction ID" value="UER00595"/>
</dbReference>
<dbReference type="Proteomes" id="UP000001865">
    <property type="component" value="Chromosome"/>
</dbReference>
<dbReference type="GO" id="GO:0005829">
    <property type="term" value="C:cytosol"/>
    <property type="evidence" value="ECO:0007669"/>
    <property type="project" value="TreeGrafter"/>
</dbReference>
<dbReference type="GO" id="GO:0005524">
    <property type="term" value="F:ATP binding"/>
    <property type="evidence" value="ECO:0007669"/>
    <property type="project" value="UniProtKB-KW"/>
</dbReference>
<dbReference type="GO" id="GO:0016979">
    <property type="term" value="F:lipoate-protein ligase activity"/>
    <property type="evidence" value="ECO:0007669"/>
    <property type="project" value="UniProtKB-UniRule"/>
</dbReference>
<dbReference type="GO" id="GO:0017118">
    <property type="term" value="F:lipoyltransferase activity"/>
    <property type="evidence" value="ECO:0007669"/>
    <property type="project" value="TreeGrafter"/>
</dbReference>
<dbReference type="GO" id="GO:0036211">
    <property type="term" value="P:protein modification process"/>
    <property type="evidence" value="ECO:0007669"/>
    <property type="project" value="InterPro"/>
</dbReference>
<dbReference type="CDD" id="cd16443">
    <property type="entry name" value="LplA"/>
    <property type="match status" value="1"/>
</dbReference>
<dbReference type="FunFam" id="3.30.390.50:FF:000002">
    <property type="entry name" value="Lipoate-protein ligase A"/>
    <property type="match status" value="1"/>
</dbReference>
<dbReference type="FunFam" id="3.30.930.10:FF:000024">
    <property type="entry name" value="Lipoate-protein ligase A"/>
    <property type="match status" value="1"/>
</dbReference>
<dbReference type="Gene3D" id="3.30.930.10">
    <property type="entry name" value="Bira Bifunctional Protein, Domain 2"/>
    <property type="match status" value="1"/>
</dbReference>
<dbReference type="Gene3D" id="3.30.390.50">
    <property type="entry name" value="CO dehydrogenase flavoprotein, C-terminal domain"/>
    <property type="match status" value="1"/>
</dbReference>
<dbReference type="HAMAP" id="MF_01602">
    <property type="entry name" value="LplA"/>
    <property type="match status" value="1"/>
</dbReference>
<dbReference type="InterPro" id="IPR045864">
    <property type="entry name" value="aa-tRNA-synth_II/BPL/LPL"/>
</dbReference>
<dbReference type="InterPro" id="IPR004143">
    <property type="entry name" value="BPL_LPL_catalytic"/>
</dbReference>
<dbReference type="InterPro" id="IPR023741">
    <property type="entry name" value="Lipoate_ligase_A"/>
</dbReference>
<dbReference type="InterPro" id="IPR019491">
    <property type="entry name" value="Lipoate_protein_ligase_C"/>
</dbReference>
<dbReference type="InterPro" id="IPR004562">
    <property type="entry name" value="LipoylTrfase_LipoateP_Ligase"/>
</dbReference>
<dbReference type="NCBIfam" id="TIGR00545">
    <property type="entry name" value="lipoyltrans"/>
    <property type="match status" value="1"/>
</dbReference>
<dbReference type="PANTHER" id="PTHR12561">
    <property type="entry name" value="LIPOATE-PROTEIN LIGASE"/>
    <property type="match status" value="1"/>
</dbReference>
<dbReference type="PANTHER" id="PTHR12561:SF3">
    <property type="entry name" value="LIPOYLTRANSFERASE 1, MITOCHONDRIAL"/>
    <property type="match status" value="1"/>
</dbReference>
<dbReference type="Pfam" id="PF10437">
    <property type="entry name" value="Lip_prot_lig_C"/>
    <property type="match status" value="1"/>
</dbReference>
<dbReference type="Pfam" id="PF21948">
    <property type="entry name" value="LplA-B_cat"/>
    <property type="match status" value="1"/>
</dbReference>
<dbReference type="SUPFAM" id="SSF55681">
    <property type="entry name" value="Class II aaRS and biotin synthetases"/>
    <property type="match status" value="1"/>
</dbReference>
<dbReference type="SUPFAM" id="SSF82649">
    <property type="entry name" value="SufE/NifU"/>
    <property type="match status" value="1"/>
</dbReference>
<dbReference type="PROSITE" id="PS51733">
    <property type="entry name" value="BPL_LPL_CATALYTIC"/>
    <property type="match status" value="1"/>
</dbReference>